<gene>
    <name type="primary">patA</name>
    <name type="ordered locus">HP_0855</name>
    <name type="ordered locus">C694_04380</name>
</gene>
<accession>O25526</accession>
<sequence>MLASIISILRVFVLLFNTPLFIFAFLPVGFLGYFILQAYAKNPLFPKLWLVLASLFFYAFWNVKYLPLLVGSIVFNYFVALKIHQTQPNAYKRLWLILGLIANVSLLGFFKYTDFFLTNFNLIWKSHFETLHLILPLAISFFTLQQIAYLMDTYKQNQIMQPKMRERVSENAPILLNPPTSFFSLSHFLDYALFVSFFPQLIAGPIVHHSEMMPQFKDKNNQYLNYRNIALGLFIFSIGLFKKVVIADNTAHFADFGFDKATSLSFIQAWMTSLSYSFQLYFDFSGYCDMAIGIGLFFNIKLPINFNSPYKALNIQDFWRRWHITLSRFLKEYLYIPLGGNRVKELIVYRNLILVFLIGGFWHGAGWTFIIWGLLHGIALSVHRAYSHATRKFHFTMPKILAWLITFNFINLAWVFFRAKNLESALKVLKGMVGLNGVSLCHLSKEASEFLNRVNDNMIMHTIMYASPTFKMCVLMIIISFCLKNSSHLYQSNQMDWIKTTSACLLLSIGFLFIFASSQSVFLYFNF</sequence>
<reference key="1">
    <citation type="journal article" date="1997" name="Nature">
        <title>The complete genome sequence of the gastric pathogen Helicobacter pylori.</title>
        <authorList>
            <person name="Tomb J.-F."/>
            <person name="White O."/>
            <person name="Kerlavage A.R."/>
            <person name="Clayton R.A."/>
            <person name="Sutton G.G."/>
            <person name="Fleischmann R.D."/>
            <person name="Ketchum K.A."/>
            <person name="Klenk H.-P."/>
            <person name="Gill S.R."/>
            <person name="Dougherty B.A."/>
            <person name="Nelson K.E."/>
            <person name="Quackenbush J."/>
            <person name="Zhou L."/>
            <person name="Kirkness E.F."/>
            <person name="Peterson S.N."/>
            <person name="Loftus B.J."/>
            <person name="Richardson D.L."/>
            <person name="Dodson R.J."/>
            <person name="Khalak H.G."/>
            <person name="Glodek A."/>
            <person name="McKenney K."/>
            <person name="FitzGerald L.M."/>
            <person name="Lee N."/>
            <person name="Adams M.D."/>
            <person name="Hickey E.K."/>
            <person name="Berg D.E."/>
            <person name="Gocayne J.D."/>
            <person name="Utterback T.R."/>
            <person name="Peterson J.D."/>
            <person name="Kelley J.M."/>
            <person name="Cotton M.D."/>
            <person name="Weidman J.F."/>
            <person name="Fujii C."/>
            <person name="Bowman C."/>
            <person name="Watthey L."/>
            <person name="Wallin E."/>
            <person name="Hayes W.S."/>
            <person name="Borodovsky M."/>
            <person name="Karp P.D."/>
            <person name="Smith H.O."/>
            <person name="Fraser C.M."/>
            <person name="Venter J.C."/>
        </authorList>
    </citation>
    <scope>NUCLEOTIDE SEQUENCE [LARGE SCALE GENOMIC DNA]</scope>
    <source>
        <strain>ATCC 700392 / 26695</strain>
    </source>
</reference>
<reference key="2">
    <citation type="submission" date="2012-10" db="EMBL/GenBank/DDBJ databases">
        <title>Draft genome of Helicobacter pylori.</title>
        <authorList>
            <person name="Manolov A."/>
            <person name="Prihodko E."/>
            <person name="Larin A."/>
            <person name="Karpova I."/>
            <person name="Semashko T."/>
            <person name="Alexeev D."/>
            <person name="Kostrjukova E."/>
            <person name="Govorun V."/>
        </authorList>
    </citation>
    <scope>NUCLEOTIDE SEQUENCE [LARGE SCALE GENOMIC DNA]</scope>
    <source>
        <strain>ATCC 700392 / 26695</strain>
    </source>
</reference>
<reference key="3">
    <citation type="journal article" date="2012" name="MBio">
        <title>Helicobacter pylori peptidoglycan modifications confer lysozyme resistance and contribute to survival in the host.</title>
        <authorList>
            <person name="Wang G."/>
            <person name="Lo L.F."/>
            <person name="Forsberg L.S."/>
            <person name="Maier R.J."/>
        </authorList>
    </citation>
    <scope>FUNCTION IN PG O-ACETYLATION</scope>
    <scope>DISRUPTION PHENOTYPE</scope>
    <source>
        <strain>ATCC 700392 / 26695</strain>
        <strain>X47</strain>
    </source>
</reference>
<name>PATA_HELPY</name>
<protein>
    <recommendedName>
        <fullName>Peptidoglycan O-acetyltransferase</fullName>
        <shortName>PG acetyltransferase</shortName>
        <ecNumber>2.3.1.-</ecNumber>
    </recommendedName>
</protein>
<keyword id="KW-0012">Acyltransferase</keyword>
<keyword id="KW-1003">Cell membrane</keyword>
<keyword id="KW-0961">Cell wall biogenesis/degradation</keyword>
<keyword id="KW-0472">Membrane</keyword>
<keyword id="KW-1185">Reference proteome</keyword>
<keyword id="KW-0808">Transferase</keyword>
<keyword id="KW-0812">Transmembrane</keyword>
<keyword id="KW-1133">Transmembrane helix</keyword>
<organism>
    <name type="scientific">Helicobacter pylori (strain ATCC 700392 / 26695)</name>
    <name type="common">Campylobacter pylori</name>
    <dbReference type="NCBI Taxonomy" id="85962"/>
    <lineage>
        <taxon>Bacteria</taxon>
        <taxon>Pseudomonadati</taxon>
        <taxon>Campylobacterota</taxon>
        <taxon>Epsilonproteobacteria</taxon>
        <taxon>Campylobacterales</taxon>
        <taxon>Helicobacteraceae</taxon>
        <taxon>Helicobacter</taxon>
    </lineage>
</organism>
<dbReference type="EC" id="2.3.1.-"/>
<dbReference type="EMBL" id="AE000511">
    <property type="protein sequence ID" value="AAD07902.1"/>
    <property type="molecule type" value="Genomic_DNA"/>
</dbReference>
<dbReference type="EMBL" id="CP003904">
    <property type="protein sequence ID" value="AFV42066.1"/>
    <property type="molecule type" value="Genomic_DNA"/>
</dbReference>
<dbReference type="PIR" id="G64626">
    <property type="entry name" value="G64626"/>
</dbReference>
<dbReference type="RefSeq" id="NP_207649.1">
    <property type="nucleotide sequence ID" value="NC_000915.1"/>
</dbReference>
<dbReference type="SMR" id="O25526"/>
<dbReference type="STRING" id="85962.HP_0855"/>
<dbReference type="PaxDb" id="85962-C694_04380"/>
<dbReference type="EnsemblBacteria" id="AAD07902">
    <property type="protein sequence ID" value="AAD07902"/>
    <property type="gene ID" value="HP_0855"/>
</dbReference>
<dbReference type="KEGG" id="heo:C694_04380"/>
<dbReference type="KEGG" id="hpy:HP_0855"/>
<dbReference type="PATRIC" id="fig|85962.47.peg.909"/>
<dbReference type="eggNOG" id="COG1696">
    <property type="taxonomic scope" value="Bacteria"/>
</dbReference>
<dbReference type="HOGENOM" id="CLU_025255_1_3_7"/>
<dbReference type="InParanoid" id="O25526"/>
<dbReference type="OrthoDB" id="139172at2"/>
<dbReference type="PhylomeDB" id="O25526"/>
<dbReference type="Proteomes" id="UP000000429">
    <property type="component" value="Chromosome"/>
</dbReference>
<dbReference type="GO" id="GO:0005886">
    <property type="term" value="C:plasma membrane"/>
    <property type="evidence" value="ECO:0007669"/>
    <property type="project" value="UniProtKB-SubCell"/>
</dbReference>
<dbReference type="GO" id="GO:0016746">
    <property type="term" value="F:acyltransferase activity"/>
    <property type="evidence" value="ECO:0000318"/>
    <property type="project" value="GO_Central"/>
</dbReference>
<dbReference type="GO" id="GO:0042121">
    <property type="term" value="P:alginic acid biosynthetic process"/>
    <property type="evidence" value="ECO:0007669"/>
    <property type="project" value="InterPro"/>
</dbReference>
<dbReference type="GO" id="GO:0071555">
    <property type="term" value="P:cell wall organization"/>
    <property type="evidence" value="ECO:0007669"/>
    <property type="project" value="UniProtKB-KW"/>
</dbReference>
<dbReference type="InterPro" id="IPR024194">
    <property type="entry name" value="Ac/AlaTfrase_AlgI/DltB"/>
</dbReference>
<dbReference type="InterPro" id="IPR028362">
    <property type="entry name" value="AlgI"/>
</dbReference>
<dbReference type="InterPro" id="IPR051085">
    <property type="entry name" value="MB_O-acyltransferase"/>
</dbReference>
<dbReference type="InterPro" id="IPR004299">
    <property type="entry name" value="MBOAT_fam"/>
</dbReference>
<dbReference type="PANTHER" id="PTHR13285">
    <property type="entry name" value="ACYLTRANSFERASE"/>
    <property type="match status" value="1"/>
</dbReference>
<dbReference type="PANTHER" id="PTHR13285:SF23">
    <property type="entry name" value="TEICHOIC ACID D-ALANYLTRANSFERASE"/>
    <property type="match status" value="1"/>
</dbReference>
<dbReference type="Pfam" id="PF03062">
    <property type="entry name" value="MBOAT"/>
    <property type="match status" value="1"/>
</dbReference>
<dbReference type="PIRSF" id="PIRSF500217">
    <property type="entry name" value="AlgI"/>
    <property type="match status" value="1"/>
</dbReference>
<dbReference type="PIRSF" id="PIRSF016636">
    <property type="entry name" value="AlgI_DltB"/>
    <property type="match status" value="1"/>
</dbReference>
<evidence type="ECO:0000255" key="1"/>
<evidence type="ECO:0000269" key="2">
    <source>
    </source>
</evidence>
<evidence type="ECO:0000305" key="3"/>
<comment type="function">
    <text evidence="2">Catalyzes the O-acetylation of peptidoglycan (PG), an important mechanism that appears to confer lysozyme resistance and contributes to pathogen persistence in the host.</text>
</comment>
<comment type="subcellular location">
    <subcellularLocation>
        <location evidence="3">Cell membrane</location>
        <topology evidence="3">Multi-pass membrane protein</topology>
    </subcellularLocation>
</comment>
<comment type="disruption phenotype">
    <text evidence="2">Cells lacking this gene contain a greatly reduced amount of acetylated muropeptides in the bacterial PG, and are more susceptible to lysozyme killing than wild-type.</text>
</comment>
<comment type="similarity">
    <text evidence="3">Belongs to the membrane-bound acyltransferase family.</text>
</comment>
<feature type="chain" id="PRO_0000424441" description="Peptidoglycan O-acetyltransferase">
    <location>
        <begin position="1"/>
        <end position="527"/>
    </location>
</feature>
<feature type="transmembrane region" description="Helical" evidence="1">
    <location>
        <begin position="11"/>
        <end position="31"/>
    </location>
</feature>
<feature type="transmembrane region" description="Helical" evidence="1">
    <location>
        <begin position="55"/>
        <end position="75"/>
    </location>
</feature>
<feature type="transmembrane region" description="Helical" evidence="1">
    <location>
        <begin position="96"/>
        <end position="116"/>
    </location>
</feature>
<feature type="transmembrane region" description="Helical" evidence="1">
    <location>
        <begin position="131"/>
        <end position="151"/>
    </location>
</feature>
<feature type="transmembrane region" description="Helical" evidence="1">
    <location>
        <begin position="187"/>
        <end position="207"/>
    </location>
</feature>
<feature type="transmembrane region" description="Helical" evidence="1">
    <location>
        <begin position="228"/>
        <end position="248"/>
    </location>
</feature>
<feature type="transmembrane region" description="Helical" evidence="1">
    <location>
        <begin position="280"/>
        <end position="300"/>
    </location>
</feature>
<feature type="transmembrane region" description="Helical" evidence="1">
    <location>
        <begin position="352"/>
        <end position="372"/>
    </location>
</feature>
<feature type="transmembrane region" description="Helical" evidence="1">
    <location>
        <begin position="397"/>
        <end position="417"/>
    </location>
</feature>
<feature type="transmembrane region" description="Helical" evidence="1">
    <location>
        <begin position="463"/>
        <end position="483"/>
    </location>
</feature>
<feature type="transmembrane region" description="Helical" evidence="1">
    <location>
        <begin position="505"/>
        <end position="525"/>
    </location>
</feature>
<feature type="active site" evidence="1">
    <location>
        <position position="363"/>
    </location>
</feature>
<proteinExistence type="evidence at protein level"/>